<keyword id="KW-1015">Disulfide bond</keyword>
<keyword id="KW-0378">Hydrolase</keyword>
<keyword id="KW-0479">Metal-binding</keyword>
<keyword id="KW-0482">Metalloprotease</keyword>
<keyword id="KW-0574">Periplasm</keyword>
<keyword id="KW-0645">Protease</keyword>
<keyword id="KW-0732">Signal</keyword>
<keyword id="KW-0862">Zinc</keyword>
<organism>
    <name type="scientific">Escherichia coli (strain SE11)</name>
    <dbReference type="NCBI Taxonomy" id="409438"/>
    <lineage>
        <taxon>Bacteria</taxon>
        <taxon>Pseudomonadati</taxon>
        <taxon>Pseudomonadota</taxon>
        <taxon>Gammaproteobacteria</taxon>
        <taxon>Enterobacterales</taxon>
        <taxon>Enterobacteriaceae</taxon>
        <taxon>Escherichia</taxon>
    </lineage>
</organism>
<reference key="1">
    <citation type="journal article" date="2008" name="DNA Res.">
        <title>Complete genome sequence and comparative analysis of the wild-type commensal Escherichia coli strain SE11 isolated from a healthy adult.</title>
        <authorList>
            <person name="Oshima K."/>
            <person name="Toh H."/>
            <person name="Ogura Y."/>
            <person name="Sasamoto H."/>
            <person name="Morita H."/>
            <person name="Park S.-H."/>
            <person name="Ooka T."/>
            <person name="Iyoda S."/>
            <person name="Taylor T.D."/>
            <person name="Hayashi T."/>
            <person name="Itoh K."/>
            <person name="Hattori M."/>
        </authorList>
    </citation>
    <scope>NUCLEOTIDE SEQUENCE [LARGE SCALE GENOMIC DNA]</scope>
    <source>
        <strain>SE11</strain>
    </source>
</reference>
<name>MEPA_ECOSE</name>
<accession>B6I4X5</accession>
<gene>
    <name evidence="1" type="primary">mepA</name>
    <name type="ordered locus">ECSE_2637</name>
</gene>
<protein>
    <recommendedName>
        <fullName evidence="1">Penicillin-insensitive murein endopeptidase</fullName>
        <ecNumber evidence="1">3.4.24.-</ecNumber>
    </recommendedName>
    <alternativeName>
        <fullName evidence="1">D-alanyl-D-alanine-endopeptidase</fullName>
        <shortName evidence="1">DD-endopeptidase</shortName>
    </alternativeName>
</protein>
<dbReference type="EC" id="3.4.24.-" evidence="1"/>
<dbReference type="EMBL" id="AP009240">
    <property type="protein sequence ID" value="BAG78161.1"/>
    <property type="molecule type" value="Genomic_DNA"/>
</dbReference>
<dbReference type="RefSeq" id="WP_001043799.1">
    <property type="nucleotide sequence ID" value="NC_011415.1"/>
</dbReference>
<dbReference type="SMR" id="B6I4X5"/>
<dbReference type="MEROPS" id="M74.001"/>
<dbReference type="KEGG" id="ecy:ECSE_2637"/>
<dbReference type="HOGENOM" id="CLU_052496_0_0_6"/>
<dbReference type="Proteomes" id="UP000008199">
    <property type="component" value="Chromosome"/>
</dbReference>
<dbReference type="GO" id="GO:0030288">
    <property type="term" value="C:outer membrane-bounded periplasmic space"/>
    <property type="evidence" value="ECO:0007669"/>
    <property type="project" value="InterPro"/>
</dbReference>
<dbReference type="GO" id="GO:0046872">
    <property type="term" value="F:metal ion binding"/>
    <property type="evidence" value="ECO:0007669"/>
    <property type="project" value="UniProtKB-KW"/>
</dbReference>
<dbReference type="GO" id="GO:0004222">
    <property type="term" value="F:metalloendopeptidase activity"/>
    <property type="evidence" value="ECO:0007669"/>
    <property type="project" value="UniProtKB-UniRule"/>
</dbReference>
<dbReference type="GO" id="GO:0004252">
    <property type="term" value="F:serine-type endopeptidase activity"/>
    <property type="evidence" value="ECO:0007669"/>
    <property type="project" value="InterPro"/>
</dbReference>
<dbReference type="GO" id="GO:0000270">
    <property type="term" value="P:peptidoglycan metabolic process"/>
    <property type="evidence" value="ECO:0007669"/>
    <property type="project" value="UniProtKB-UniRule"/>
</dbReference>
<dbReference type="GO" id="GO:0006508">
    <property type="term" value="P:proteolysis"/>
    <property type="evidence" value="ECO:0007669"/>
    <property type="project" value="UniProtKB-KW"/>
</dbReference>
<dbReference type="FunFam" id="3.30.1380.10:FF:000002">
    <property type="entry name" value="Penicillin-insensitive murein endopeptidase"/>
    <property type="match status" value="1"/>
</dbReference>
<dbReference type="Gene3D" id="3.30.1380.10">
    <property type="match status" value="1"/>
</dbReference>
<dbReference type="HAMAP" id="MF_01623">
    <property type="entry name" value="MepA"/>
    <property type="match status" value="1"/>
</dbReference>
<dbReference type="InterPro" id="IPR009045">
    <property type="entry name" value="Hedgehog_sig/DD-Pept_Zn-bd_sf"/>
</dbReference>
<dbReference type="InterPro" id="IPR005073">
    <property type="entry name" value="Peptidase_M74"/>
</dbReference>
<dbReference type="NCBIfam" id="NF006947">
    <property type="entry name" value="PRK09429.1"/>
    <property type="match status" value="1"/>
</dbReference>
<dbReference type="Pfam" id="PF03411">
    <property type="entry name" value="Peptidase_M74"/>
    <property type="match status" value="1"/>
</dbReference>
<dbReference type="PIRSF" id="PIRSF018455">
    <property type="entry name" value="MepA"/>
    <property type="match status" value="1"/>
</dbReference>
<dbReference type="SUPFAM" id="SSF55166">
    <property type="entry name" value="Hedgehog/DD-peptidase"/>
    <property type="match status" value="1"/>
</dbReference>
<proteinExistence type="inferred from homology"/>
<sequence length="274" mass="30142">MNKTAIALLALLASSASLAATPWQKITQPVPGSAQSIGSFSNGCIVGADTLPIQSEHYQVMRTDLRRYFGHPDLVMFIQRLSSQVSNLGMGTVLIGDMGMPAGGRFNGGHASHQTGLDVDIFLQLPKTRWTSAQLLRPQALDLVSRDGKHVVPTLWKPEIFSLIKLAAQDKDVTRIFVNPAIKQQLCLDAGTDRDWLRKVRPWFQHRAHMHVRLRCPADSLECEDQPLPPPGDGCGAELQSWFEPPKPGTTKPEKKTPPPLPPSCQALLDEHVI</sequence>
<evidence type="ECO:0000255" key="1">
    <source>
        <dbReference type="HAMAP-Rule" id="MF_01623"/>
    </source>
</evidence>
<evidence type="ECO:0000256" key="2">
    <source>
        <dbReference type="SAM" id="MobiDB-lite"/>
    </source>
</evidence>
<comment type="function">
    <text evidence="1">Murein endopeptidase that cleaves the D-alanyl-meso-2,6-diamino-pimelyl amide bond that connects peptidoglycan strands. Likely plays a role in the removal of murein from the sacculus.</text>
</comment>
<comment type="cofactor">
    <cofactor evidence="1">
        <name>Zn(2+)</name>
        <dbReference type="ChEBI" id="CHEBI:29105"/>
    </cofactor>
    <text evidence="1">Binds 2 Zn(2+) ions per subunit. Zn(2+) ion 1 is bound in the active site. Zn(2+) ion 2 is bound at the dimer interface by residues from both subunits.</text>
</comment>
<comment type="subunit">
    <text evidence="1">Dimer.</text>
</comment>
<comment type="subcellular location">
    <subcellularLocation>
        <location evidence="1">Periplasm</location>
    </subcellularLocation>
</comment>
<comment type="similarity">
    <text evidence="1">Belongs to the peptidase M74 family.</text>
</comment>
<feature type="signal peptide" evidence="1">
    <location>
        <begin position="1"/>
        <end position="19"/>
    </location>
</feature>
<feature type="chain" id="PRO_1000186101" description="Penicillin-insensitive murein endopeptidase">
    <location>
        <begin position="20"/>
        <end position="274"/>
    </location>
</feature>
<feature type="region of interest" description="Disordered" evidence="2">
    <location>
        <begin position="227"/>
        <end position="274"/>
    </location>
</feature>
<feature type="binding site" evidence="1">
    <location>
        <position position="110"/>
    </location>
    <ligand>
        <name>Zn(2+)</name>
        <dbReference type="ChEBI" id="CHEBI:29105"/>
        <label>1</label>
    </ligand>
</feature>
<feature type="binding site" evidence="1">
    <location>
        <position position="113"/>
    </location>
    <ligand>
        <name>Zn(2+)</name>
        <dbReference type="ChEBI" id="CHEBI:29105"/>
        <label>1</label>
    </ligand>
</feature>
<feature type="binding site" evidence="1">
    <location>
        <position position="120"/>
    </location>
    <ligand>
        <name>Zn(2+)</name>
        <dbReference type="ChEBI" id="CHEBI:29105"/>
        <label>1</label>
    </ligand>
</feature>
<feature type="binding site" evidence="1">
    <location>
        <position position="147"/>
    </location>
    <ligand>
        <name>Zn(2+)</name>
        <dbReference type="ChEBI" id="CHEBI:29105"/>
        <label>2</label>
    </ligand>
</feature>
<feature type="binding site" evidence="1">
    <location>
        <position position="150"/>
    </location>
    <ligand>
        <name>Zn(2+)</name>
        <dbReference type="ChEBI" id="CHEBI:29105"/>
        <label>2</label>
    </ligand>
</feature>
<feature type="binding site" evidence="1">
    <location>
        <position position="211"/>
    </location>
    <ligand>
        <name>Zn(2+)</name>
        <dbReference type="ChEBI" id="CHEBI:29105"/>
        <label>1</label>
    </ligand>
</feature>
<feature type="disulfide bond" evidence="1">
    <location>
        <begin position="44"/>
        <end position="265"/>
    </location>
</feature>
<feature type="disulfide bond" evidence="1">
    <location>
        <begin position="187"/>
        <end position="235"/>
    </location>
</feature>
<feature type="disulfide bond" evidence="1">
    <location>
        <begin position="216"/>
        <end position="223"/>
    </location>
</feature>